<reference key="1">
    <citation type="journal article" date="2005" name="Genome Res.">
        <title>Complete genome sequence of the hyperthermophilic archaeon Thermococcus kodakaraensis KOD1 and comparison with Pyrococcus genomes.</title>
        <authorList>
            <person name="Fukui T."/>
            <person name="Atomi H."/>
            <person name="Kanai T."/>
            <person name="Matsumi R."/>
            <person name="Fujiwara S."/>
            <person name="Imanaka T."/>
        </authorList>
    </citation>
    <scope>NUCLEOTIDE SEQUENCE [LARGE SCALE GENOMIC DNA]</scope>
    <source>
        <strain>ATCC BAA-918 / JCM 12380 / KOD1</strain>
    </source>
</reference>
<comment type="function">
    <text evidence="1">Non-catalytic component of the exosome, which is a complex involved in RNA degradation. Contributes to the structuring of the Rrp41 active site.</text>
</comment>
<comment type="subunit">
    <text evidence="1">Component of the archaeal exosome complex. Forms a hexameric ring-like arrangement composed of 3 Rrp41-Rrp42 heterodimers. The hexameric ring associates with a trimer of Rrp4 and/or Csl4 subunits.</text>
</comment>
<comment type="subcellular location">
    <subcellularLocation>
        <location evidence="1">Cytoplasm</location>
    </subcellularLocation>
</comment>
<comment type="similarity">
    <text evidence="1">Belongs to the RNase PH family. Rrp42 subfamily.</text>
</comment>
<protein>
    <recommendedName>
        <fullName evidence="1">Exosome complex component Rrp42</fullName>
    </recommendedName>
</protein>
<feature type="chain" id="PRO_0000140005" description="Exosome complex component Rrp42">
    <location>
        <begin position="1"/>
        <end position="272"/>
    </location>
</feature>
<organism>
    <name type="scientific">Thermococcus kodakarensis (strain ATCC BAA-918 / JCM 12380 / KOD1)</name>
    <name type="common">Pyrococcus kodakaraensis (strain KOD1)</name>
    <dbReference type="NCBI Taxonomy" id="69014"/>
    <lineage>
        <taxon>Archaea</taxon>
        <taxon>Methanobacteriati</taxon>
        <taxon>Methanobacteriota</taxon>
        <taxon>Thermococci</taxon>
        <taxon>Thermococcales</taxon>
        <taxon>Thermococcaceae</taxon>
        <taxon>Thermococcus</taxon>
    </lineage>
</organism>
<name>RRP42_THEKO</name>
<accession>Q5JIR7</accession>
<evidence type="ECO:0000255" key="1">
    <source>
        <dbReference type="HAMAP-Rule" id="MF_00622"/>
    </source>
</evidence>
<sequence length="272" mass="29775">MSEMEVMASIMRDHIIELLREGKRIDGRSFEDYRDLEIKVNVIEKAEGSAWVRLGDTQVLVGIKAELGEPFPDLPDRGVITTNVELVPLASPTFEPGPPDENAIELARVVDRGIRESQAVDLEKLVIVPGKLVRVIFIDVHVLDHGGNLLDASGIGAIAALLSTKLPKVNYNEETGEVEILDEYEPLPVNHVPIPVTFAKIGNSIVVDPSLDEERVMDGRLTITTDETGHISAAQKGEAGAFKMEEVMYALEVALKKGNEIREKVLKAVGRA</sequence>
<gene>
    <name evidence="1" type="primary">rrp42</name>
    <name type="ordered locus">TK1633</name>
</gene>
<keyword id="KW-0963">Cytoplasm</keyword>
<keyword id="KW-0271">Exosome</keyword>
<keyword id="KW-1185">Reference proteome</keyword>
<dbReference type="EMBL" id="AP006878">
    <property type="protein sequence ID" value="BAD85822.1"/>
    <property type="molecule type" value="Genomic_DNA"/>
</dbReference>
<dbReference type="RefSeq" id="WP_011250584.1">
    <property type="nucleotide sequence ID" value="NC_006624.1"/>
</dbReference>
<dbReference type="SMR" id="Q5JIR7"/>
<dbReference type="STRING" id="69014.TK1633"/>
<dbReference type="EnsemblBacteria" id="BAD85822">
    <property type="protein sequence ID" value="BAD85822"/>
    <property type="gene ID" value="TK1633"/>
</dbReference>
<dbReference type="GeneID" id="78448161"/>
<dbReference type="KEGG" id="tko:TK1633"/>
<dbReference type="PATRIC" id="fig|69014.16.peg.1592"/>
<dbReference type="eggNOG" id="arCOG01574">
    <property type="taxonomic scope" value="Archaea"/>
</dbReference>
<dbReference type="HOGENOM" id="CLU_038194_0_0_2"/>
<dbReference type="InParanoid" id="Q5JIR7"/>
<dbReference type="OrthoDB" id="30932at2157"/>
<dbReference type="PhylomeDB" id="Q5JIR7"/>
<dbReference type="Proteomes" id="UP000000536">
    <property type="component" value="Chromosome"/>
</dbReference>
<dbReference type="GO" id="GO:0000177">
    <property type="term" value="C:cytoplasmic exosome (RNase complex)"/>
    <property type="evidence" value="ECO:0000318"/>
    <property type="project" value="GO_Central"/>
</dbReference>
<dbReference type="GO" id="GO:0035925">
    <property type="term" value="F:mRNA 3'-UTR AU-rich region binding"/>
    <property type="evidence" value="ECO:0000318"/>
    <property type="project" value="GO_Central"/>
</dbReference>
<dbReference type="GO" id="GO:0016075">
    <property type="term" value="P:rRNA catabolic process"/>
    <property type="evidence" value="ECO:0000318"/>
    <property type="project" value="GO_Central"/>
</dbReference>
<dbReference type="CDD" id="cd11365">
    <property type="entry name" value="RNase_PH_archRRP42"/>
    <property type="match status" value="1"/>
</dbReference>
<dbReference type="FunFam" id="3.30.230.70:FF:000017">
    <property type="entry name" value="Exosome complex component Rrp42"/>
    <property type="match status" value="1"/>
</dbReference>
<dbReference type="Gene3D" id="3.30.230.70">
    <property type="entry name" value="GHMP Kinase, N-terminal domain"/>
    <property type="match status" value="1"/>
</dbReference>
<dbReference type="HAMAP" id="MF_00622">
    <property type="entry name" value="Exosome_Rrp42"/>
    <property type="match status" value="1"/>
</dbReference>
<dbReference type="InterPro" id="IPR001247">
    <property type="entry name" value="ExoRNase_PH_dom1"/>
</dbReference>
<dbReference type="InterPro" id="IPR015847">
    <property type="entry name" value="ExoRNase_PH_dom2"/>
</dbReference>
<dbReference type="InterPro" id="IPR036345">
    <property type="entry name" value="ExoRNase_PH_dom2_sf"/>
</dbReference>
<dbReference type="InterPro" id="IPR050590">
    <property type="entry name" value="Exosome_comp_Rrp42_subfam"/>
</dbReference>
<dbReference type="InterPro" id="IPR027408">
    <property type="entry name" value="PNPase/RNase_PH_dom_sf"/>
</dbReference>
<dbReference type="InterPro" id="IPR020568">
    <property type="entry name" value="Ribosomal_Su5_D2-typ_SF"/>
</dbReference>
<dbReference type="InterPro" id="IPR020869">
    <property type="entry name" value="Rrp42_archaea"/>
</dbReference>
<dbReference type="NCBIfam" id="NF003282">
    <property type="entry name" value="PRK04282.1-1"/>
    <property type="match status" value="1"/>
</dbReference>
<dbReference type="PANTHER" id="PTHR11097:SF8">
    <property type="entry name" value="EXOSOME COMPLEX COMPONENT RRP42"/>
    <property type="match status" value="1"/>
</dbReference>
<dbReference type="PANTHER" id="PTHR11097">
    <property type="entry name" value="EXOSOME COMPLEX EXONUCLEASE RIBOSOMAL RNA PROCESSING PROTEIN"/>
    <property type="match status" value="1"/>
</dbReference>
<dbReference type="Pfam" id="PF01138">
    <property type="entry name" value="RNase_PH"/>
    <property type="match status" value="1"/>
</dbReference>
<dbReference type="Pfam" id="PF03725">
    <property type="entry name" value="RNase_PH_C"/>
    <property type="match status" value="1"/>
</dbReference>
<dbReference type="SUPFAM" id="SSF55666">
    <property type="entry name" value="Ribonuclease PH domain 2-like"/>
    <property type="match status" value="1"/>
</dbReference>
<dbReference type="SUPFAM" id="SSF54211">
    <property type="entry name" value="Ribosomal protein S5 domain 2-like"/>
    <property type="match status" value="1"/>
</dbReference>
<proteinExistence type="inferred from homology"/>